<name>ILVC_STRPJ</name>
<protein>
    <recommendedName>
        <fullName evidence="1">Ketol-acid reductoisomerase (NADP(+))</fullName>
        <shortName evidence="1">KARI</shortName>
        <ecNumber evidence="1">1.1.1.86</ecNumber>
    </recommendedName>
    <alternativeName>
        <fullName evidence="1">Acetohydroxy-acid isomeroreductase</fullName>
        <shortName evidence="1">AHIR</shortName>
    </alternativeName>
    <alternativeName>
        <fullName evidence="1">Alpha-keto-beta-hydroxylacyl reductoisomerase</fullName>
    </alternativeName>
    <alternativeName>
        <fullName evidence="1">Ketol-acid reductoisomerase type 1</fullName>
    </alternativeName>
    <alternativeName>
        <fullName evidence="1">Ketol-acid reductoisomerase type I</fullName>
    </alternativeName>
</protein>
<sequence length="340" mass="37350">MTVQMEYEKDVKVAALDGKKIAVIGYGSQGHAHAQNLRDSGRDVIIGVRPGKSFDKAKEDGFDTYTVAEATKLADVIMILAPDEIQQELYEAEIAPNLEAGNAVGFAHGFNIHFEFIKVPADVDVFMCAPKGPGHLVRRTYEEGFGVPALYAVYQDATGNAKNIAMDWCKGVGAARVGLLETTYKEETEEDLFGEQAVLCGGLTALIEAGFEVLTEAGYAPELAYFEVLHEMKLIVDLIYEGGFKKMRQSISNTAEYGDYVSGPRVITEQVKENMKAVLADIQNGKFANDFVNDYKAGRPKLTAYREQAANLEIEKVGAELRKAMPFVGKNDDDAFKIYN</sequence>
<organism>
    <name type="scientific">Streptococcus pneumoniae (strain ATCC 700669 / Spain 23F-1)</name>
    <dbReference type="NCBI Taxonomy" id="561276"/>
    <lineage>
        <taxon>Bacteria</taxon>
        <taxon>Bacillati</taxon>
        <taxon>Bacillota</taxon>
        <taxon>Bacilli</taxon>
        <taxon>Lactobacillales</taxon>
        <taxon>Streptococcaceae</taxon>
        <taxon>Streptococcus</taxon>
    </lineage>
</organism>
<accession>B8ZLL0</accession>
<reference key="1">
    <citation type="journal article" date="2009" name="J. Bacteriol.">
        <title>Role of conjugative elements in the evolution of the multidrug-resistant pandemic clone Streptococcus pneumoniae Spain23F ST81.</title>
        <authorList>
            <person name="Croucher N.J."/>
            <person name="Walker D."/>
            <person name="Romero P."/>
            <person name="Lennard N."/>
            <person name="Paterson G.K."/>
            <person name="Bason N.C."/>
            <person name="Mitchell A.M."/>
            <person name="Quail M.A."/>
            <person name="Andrew P.W."/>
            <person name="Parkhill J."/>
            <person name="Bentley S.D."/>
            <person name="Mitchell T.J."/>
        </authorList>
    </citation>
    <scope>NUCLEOTIDE SEQUENCE [LARGE SCALE GENOMIC DNA]</scope>
    <source>
        <strain>ATCC 700669 / Spain 23F-1</strain>
    </source>
</reference>
<feature type="chain" id="PRO_1000190997" description="Ketol-acid reductoisomerase (NADP(+))">
    <location>
        <begin position="1"/>
        <end position="340"/>
    </location>
</feature>
<feature type="domain" description="KARI N-terminal Rossmann" evidence="2">
    <location>
        <begin position="3"/>
        <end position="182"/>
    </location>
</feature>
<feature type="domain" description="KARI C-terminal knotted" evidence="3">
    <location>
        <begin position="183"/>
        <end position="328"/>
    </location>
</feature>
<feature type="active site" evidence="1">
    <location>
        <position position="108"/>
    </location>
</feature>
<feature type="binding site" evidence="1">
    <location>
        <begin position="26"/>
        <end position="29"/>
    </location>
    <ligand>
        <name>NADP(+)</name>
        <dbReference type="ChEBI" id="CHEBI:58349"/>
    </ligand>
</feature>
<feature type="binding site" evidence="1">
    <location>
        <position position="49"/>
    </location>
    <ligand>
        <name>NADP(+)</name>
        <dbReference type="ChEBI" id="CHEBI:58349"/>
    </ligand>
</feature>
<feature type="binding site" evidence="1">
    <location>
        <position position="53"/>
    </location>
    <ligand>
        <name>NADP(+)</name>
        <dbReference type="ChEBI" id="CHEBI:58349"/>
    </ligand>
</feature>
<feature type="binding site" evidence="1">
    <location>
        <begin position="83"/>
        <end position="86"/>
    </location>
    <ligand>
        <name>NADP(+)</name>
        <dbReference type="ChEBI" id="CHEBI:58349"/>
    </ligand>
</feature>
<feature type="binding site" evidence="1">
    <location>
        <position position="134"/>
    </location>
    <ligand>
        <name>NADP(+)</name>
        <dbReference type="ChEBI" id="CHEBI:58349"/>
    </ligand>
</feature>
<feature type="binding site" evidence="1">
    <location>
        <position position="191"/>
    </location>
    <ligand>
        <name>Mg(2+)</name>
        <dbReference type="ChEBI" id="CHEBI:18420"/>
        <label>1</label>
    </ligand>
</feature>
<feature type="binding site" evidence="1">
    <location>
        <position position="191"/>
    </location>
    <ligand>
        <name>Mg(2+)</name>
        <dbReference type="ChEBI" id="CHEBI:18420"/>
        <label>2</label>
    </ligand>
</feature>
<feature type="binding site" evidence="1">
    <location>
        <position position="195"/>
    </location>
    <ligand>
        <name>Mg(2+)</name>
        <dbReference type="ChEBI" id="CHEBI:18420"/>
        <label>1</label>
    </ligand>
</feature>
<feature type="binding site" evidence="1">
    <location>
        <position position="227"/>
    </location>
    <ligand>
        <name>Mg(2+)</name>
        <dbReference type="ChEBI" id="CHEBI:18420"/>
        <label>2</label>
    </ligand>
</feature>
<feature type="binding site" evidence="1">
    <location>
        <position position="231"/>
    </location>
    <ligand>
        <name>Mg(2+)</name>
        <dbReference type="ChEBI" id="CHEBI:18420"/>
        <label>2</label>
    </ligand>
</feature>
<feature type="binding site" evidence="1">
    <location>
        <position position="252"/>
    </location>
    <ligand>
        <name>substrate</name>
    </ligand>
</feature>
<dbReference type="EC" id="1.1.1.86" evidence="1"/>
<dbReference type="EMBL" id="FM211187">
    <property type="protein sequence ID" value="CAR68268.1"/>
    <property type="molecule type" value="Genomic_DNA"/>
</dbReference>
<dbReference type="RefSeq" id="WP_000218054.1">
    <property type="nucleotide sequence ID" value="NC_011900.1"/>
</dbReference>
<dbReference type="SMR" id="B8ZLL0"/>
<dbReference type="GeneID" id="45652102"/>
<dbReference type="KEGG" id="sne:SPN23F04190"/>
<dbReference type="HOGENOM" id="CLU_033821_0_1_9"/>
<dbReference type="UniPathway" id="UPA00047">
    <property type="reaction ID" value="UER00056"/>
</dbReference>
<dbReference type="UniPathway" id="UPA00049">
    <property type="reaction ID" value="UER00060"/>
</dbReference>
<dbReference type="GO" id="GO:0005829">
    <property type="term" value="C:cytosol"/>
    <property type="evidence" value="ECO:0007669"/>
    <property type="project" value="TreeGrafter"/>
</dbReference>
<dbReference type="GO" id="GO:0004455">
    <property type="term" value="F:ketol-acid reductoisomerase activity"/>
    <property type="evidence" value="ECO:0007669"/>
    <property type="project" value="UniProtKB-UniRule"/>
</dbReference>
<dbReference type="GO" id="GO:0000287">
    <property type="term" value="F:magnesium ion binding"/>
    <property type="evidence" value="ECO:0007669"/>
    <property type="project" value="UniProtKB-UniRule"/>
</dbReference>
<dbReference type="GO" id="GO:0050661">
    <property type="term" value="F:NADP binding"/>
    <property type="evidence" value="ECO:0007669"/>
    <property type="project" value="InterPro"/>
</dbReference>
<dbReference type="GO" id="GO:0009097">
    <property type="term" value="P:isoleucine biosynthetic process"/>
    <property type="evidence" value="ECO:0007669"/>
    <property type="project" value="UniProtKB-UniRule"/>
</dbReference>
<dbReference type="GO" id="GO:0009099">
    <property type="term" value="P:L-valine biosynthetic process"/>
    <property type="evidence" value="ECO:0007669"/>
    <property type="project" value="UniProtKB-UniRule"/>
</dbReference>
<dbReference type="FunFam" id="3.40.50.720:FF:000023">
    <property type="entry name" value="Ketol-acid reductoisomerase (NADP(+))"/>
    <property type="match status" value="1"/>
</dbReference>
<dbReference type="Gene3D" id="6.10.240.10">
    <property type="match status" value="1"/>
</dbReference>
<dbReference type="Gene3D" id="3.40.50.720">
    <property type="entry name" value="NAD(P)-binding Rossmann-like Domain"/>
    <property type="match status" value="1"/>
</dbReference>
<dbReference type="HAMAP" id="MF_00435">
    <property type="entry name" value="IlvC"/>
    <property type="match status" value="1"/>
</dbReference>
<dbReference type="InterPro" id="IPR008927">
    <property type="entry name" value="6-PGluconate_DH-like_C_sf"/>
</dbReference>
<dbReference type="InterPro" id="IPR013023">
    <property type="entry name" value="KARI"/>
</dbReference>
<dbReference type="InterPro" id="IPR000506">
    <property type="entry name" value="KARI_C"/>
</dbReference>
<dbReference type="InterPro" id="IPR013116">
    <property type="entry name" value="KARI_N"/>
</dbReference>
<dbReference type="InterPro" id="IPR014359">
    <property type="entry name" value="KARI_prok"/>
</dbReference>
<dbReference type="InterPro" id="IPR036291">
    <property type="entry name" value="NAD(P)-bd_dom_sf"/>
</dbReference>
<dbReference type="NCBIfam" id="TIGR00465">
    <property type="entry name" value="ilvC"/>
    <property type="match status" value="1"/>
</dbReference>
<dbReference type="NCBIfam" id="NF004017">
    <property type="entry name" value="PRK05479.1"/>
    <property type="match status" value="1"/>
</dbReference>
<dbReference type="NCBIfam" id="NF009940">
    <property type="entry name" value="PRK13403.1"/>
    <property type="match status" value="1"/>
</dbReference>
<dbReference type="PANTHER" id="PTHR21371">
    <property type="entry name" value="KETOL-ACID REDUCTOISOMERASE, MITOCHONDRIAL"/>
    <property type="match status" value="1"/>
</dbReference>
<dbReference type="PANTHER" id="PTHR21371:SF1">
    <property type="entry name" value="KETOL-ACID REDUCTOISOMERASE, MITOCHONDRIAL"/>
    <property type="match status" value="1"/>
</dbReference>
<dbReference type="Pfam" id="PF01450">
    <property type="entry name" value="KARI_C"/>
    <property type="match status" value="1"/>
</dbReference>
<dbReference type="Pfam" id="PF07991">
    <property type="entry name" value="KARI_N"/>
    <property type="match status" value="1"/>
</dbReference>
<dbReference type="PIRSF" id="PIRSF000116">
    <property type="entry name" value="IlvC_gammaproteo"/>
    <property type="match status" value="1"/>
</dbReference>
<dbReference type="SUPFAM" id="SSF48179">
    <property type="entry name" value="6-phosphogluconate dehydrogenase C-terminal domain-like"/>
    <property type="match status" value="1"/>
</dbReference>
<dbReference type="SUPFAM" id="SSF51735">
    <property type="entry name" value="NAD(P)-binding Rossmann-fold domains"/>
    <property type="match status" value="1"/>
</dbReference>
<dbReference type="PROSITE" id="PS51851">
    <property type="entry name" value="KARI_C"/>
    <property type="match status" value="1"/>
</dbReference>
<dbReference type="PROSITE" id="PS51850">
    <property type="entry name" value="KARI_N"/>
    <property type="match status" value="1"/>
</dbReference>
<gene>
    <name evidence="1" type="primary">ilvC</name>
    <name type="ordered locus">SPN23F04190</name>
</gene>
<comment type="function">
    <text evidence="1">Involved in the biosynthesis of branched-chain amino acids (BCAA). Catalyzes an alkyl-migration followed by a ketol-acid reduction of (S)-2-acetolactate (S2AL) to yield (R)-2,3-dihydroxy-isovalerate. In the isomerase reaction, S2AL is rearranged via a Mg-dependent methyl migration to produce 3-hydroxy-3-methyl-2-ketobutyrate (HMKB). In the reductase reaction, this 2-ketoacid undergoes a metal-dependent reduction by NADPH to yield (R)-2,3-dihydroxy-isovalerate.</text>
</comment>
<comment type="catalytic activity">
    <reaction evidence="1">
        <text>(2R)-2,3-dihydroxy-3-methylbutanoate + NADP(+) = (2S)-2-acetolactate + NADPH + H(+)</text>
        <dbReference type="Rhea" id="RHEA:22068"/>
        <dbReference type="ChEBI" id="CHEBI:15378"/>
        <dbReference type="ChEBI" id="CHEBI:49072"/>
        <dbReference type="ChEBI" id="CHEBI:57783"/>
        <dbReference type="ChEBI" id="CHEBI:58349"/>
        <dbReference type="ChEBI" id="CHEBI:58476"/>
        <dbReference type="EC" id="1.1.1.86"/>
    </reaction>
</comment>
<comment type="catalytic activity">
    <reaction evidence="1">
        <text>(2R,3R)-2,3-dihydroxy-3-methylpentanoate + NADP(+) = (S)-2-ethyl-2-hydroxy-3-oxobutanoate + NADPH + H(+)</text>
        <dbReference type="Rhea" id="RHEA:13493"/>
        <dbReference type="ChEBI" id="CHEBI:15378"/>
        <dbReference type="ChEBI" id="CHEBI:49256"/>
        <dbReference type="ChEBI" id="CHEBI:49258"/>
        <dbReference type="ChEBI" id="CHEBI:57783"/>
        <dbReference type="ChEBI" id="CHEBI:58349"/>
        <dbReference type="EC" id="1.1.1.86"/>
    </reaction>
</comment>
<comment type="cofactor">
    <cofactor evidence="1">
        <name>Mg(2+)</name>
        <dbReference type="ChEBI" id="CHEBI:18420"/>
    </cofactor>
    <text evidence="1">Binds 2 magnesium ions per subunit.</text>
</comment>
<comment type="pathway">
    <text evidence="1">Amino-acid biosynthesis; L-isoleucine biosynthesis; L-isoleucine from 2-oxobutanoate: step 2/4.</text>
</comment>
<comment type="pathway">
    <text evidence="1">Amino-acid biosynthesis; L-valine biosynthesis; L-valine from pyruvate: step 2/4.</text>
</comment>
<comment type="similarity">
    <text evidence="1">Belongs to the ketol-acid reductoisomerase family.</text>
</comment>
<keyword id="KW-0028">Amino-acid biosynthesis</keyword>
<keyword id="KW-0100">Branched-chain amino acid biosynthesis</keyword>
<keyword id="KW-0460">Magnesium</keyword>
<keyword id="KW-0479">Metal-binding</keyword>
<keyword id="KW-0521">NADP</keyword>
<keyword id="KW-0560">Oxidoreductase</keyword>
<proteinExistence type="inferred from homology"/>
<evidence type="ECO:0000255" key="1">
    <source>
        <dbReference type="HAMAP-Rule" id="MF_00435"/>
    </source>
</evidence>
<evidence type="ECO:0000255" key="2">
    <source>
        <dbReference type="PROSITE-ProRule" id="PRU01197"/>
    </source>
</evidence>
<evidence type="ECO:0000255" key="3">
    <source>
        <dbReference type="PROSITE-ProRule" id="PRU01198"/>
    </source>
</evidence>